<protein>
    <recommendedName>
        <fullName evidence="1">Phosphatidylglycerol--prolipoprotein diacylglyceryl transferase</fullName>
        <ecNumber evidence="1">2.5.1.145</ecNumber>
    </recommendedName>
</protein>
<gene>
    <name evidence="1" type="primary">lgt</name>
    <name type="ordered locus">BG0361</name>
</gene>
<accession>Q661Q7</accession>
<feature type="chain" id="PRO_0000172564" description="Phosphatidylglycerol--prolipoprotein diacylglyceryl transferase">
    <location>
        <begin position="1"/>
        <end position="328"/>
    </location>
</feature>
<feature type="transmembrane region" description="Helical" evidence="1">
    <location>
        <begin position="15"/>
        <end position="35"/>
    </location>
</feature>
<feature type="transmembrane region" description="Helical" evidence="1">
    <location>
        <begin position="58"/>
        <end position="78"/>
    </location>
</feature>
<feature type="transmembrane region" description="Helical" evidence="1">
    <location>
        <begin position="106"/>
        <end position="126"/>
    </location>
</feature>
<feature type="transmembrane region" description="Helical" evidence="1">
    <location>
        <begin position="242"/>
        <end position="262"/>
    </location>
</feature>
<feature type="transmembrane region" description="Helical" evidence="1">
    <location>
        <begin position="289"/>
        <end position="309"/>
    </location>
</feature>
<feature type="binding site" evidence="1">
    <location>
        <position position="156"/>
    </location>
    <ligand>
        <name>a 1,2-diacyl-sn-glycero-3-phospho-(1'-sn-glycerol)</name>
        <dbReference type="ChEBI" id="CHEBI:64716"/>
    </ligand>
</feature>
<keyword id="KW-0997">Cell inner membrane</keyword>
<keyword id="KW-1003">Cell membrane</keyword>
<keyword id="KW-0472">Membrane</keyword>
<keyword id="KW-0808">Transferase</keyword>
<keyword id="KW-0812">Transmembrane</keyword>
<keyword id="KW-1133">Transmembrane helix</keyword>
<name>LGT_BORGP</name>
<dbReference type="EC" id="2.5.1.145" evidence="1"/>
<dbReference type="EMBL" id="CP000013">
    <property type="protein sequence ID" value="AAU07214.1"/>
    <property type="molecule type" value="Genomic_DNA"/>
</dbReference>
<dbReference type="RefSeq" id="WP_011193688.1">
    <property type="nucleotide sequence ID" value="NC_006156.1"/>
</dbReference>
<dbReference type="SMR" id="Q661Q7"/>
<dbReference type="GeneID" id="45161149"/>
<dbReference type="KEGG" id="bga:BG0361"/>
<dbReference type="eggNOG" id="COG0682">
    <property type="taxonomic scope" value="Bacteria"/>
</dbReference>
<dbReference type="HOGENOM" id="CLU_013386_1_0_12"/>
<dbReference type="OrthoDB" id="871140at2"/>
<dbReference type="UniPathway" id="UPA00664"/>
<dbReference type="Proteomes" id="UP000002276">
    <property type="component" value="Chromosome"/>
</dbReference>
<dbReference type="GO" id="GO:0005886">
    <property type="term" value="C:plasma membrane"/>
    <property type="evidence" value="ECO:0007669"/>
    <property type="project" value="UniProtKB-SubCell"/>
</dbReference>
<dbReference type="GO" id="GO:0008961">
    <property type="term" value="F:phosphatidylglycerol-prolipoprotein diacylglyceryl transferase activity"/>
    <property type="evidence" value="ECO:0007669"/>
    <property type="project" value="UniProtKB-UniRule"/>
</dbReference>
<dbReference type="GO" id="GO:0042158">
    <property type="term" value="P:lipoprotein biosynthetic process"/>
    <property type="evidence" value="ECO:0007669"/>
    <property type="project" value="UniProtKB-UniRule"/>
</dbReference>
<dbReference type="HAMAP" id="MF_01147">
    <property type="entry name" value="Lgt"/>
    <property type="match status" value="1"/>
</dbReference>
<dbReference type="InterPro" id="IPR001640">
    <property type="entry name" value="Lgt"/>
</dbReference>
<dbReference type="NCBIfam" id="TIGR00544">
    <property type="entry name" value="lgt"/>
    <property type="match status" value="1"/>
</dbReference>
<dbReference type="PANTHER" id="PTHR30589:SF0">
    <property type="entry name" value="PHOSPHATIDYLGLYCEROL--PROLIPOPROTEIN DIACYLGLYCERYL TRANSFERASE"/>
    <property type="match status" value="1"/>
</dbReference>
<dbReference type="PANTHER" id="PTHR30589">
    <property type="entry name" value="PROLIPOPROTEIN DIACYLGLYCERYL TRANSFERASE"/>
    <property type="match status" value="1"/>
</dbReference>
<dbReference type="Pfam" id="PF01790">
    <property type="entry name" value="LGT"/>
    <property type="match status" value="1"/>
</dbReference>
<dbReference type="PROSITE" id="PS01311">
    <property type="entry name" value="LGT"/>
    <property type="match status" value="1"/>
</dbReference>
<comment type="function">
    <text evidence="1">Catalyzes the transfer of the diacylglyceryl group from phosphatidylglycerol to the sulfhydryl group of the N-terminal cysteine of a prolipoprotein, the first step in the formation of mature lipoproteins.</text>
</comment>
<comment type="catalytic activity">
    <reaction evidence="1">
        <text>L-cysteinyl-[prolipoprotein] + a 1,2-diacyl-sn-glycero-3-phospho-(1'-sn-glycerol) = an S-1,2-diacyl-sn-glyceryl-L-cysteinyl-[prolipoprotein] + sn-glycerol 1-phosphate + H(+)</text>
        <dbReference type="Rhea" id="RHEA:56712"/>
        <dbReference type="Rhea" id="RHEA-COMP:14679"/>
        <dbReference type="Rhea" id="RHEA-COMP:14680"/>
        <dbReference type="ChEBI" id="CHEBI:15378"/>
        <dbReference type="ChEBI" id="CHEBI:29950"/>
        <dbReference type="ChEBI" id="CHEBI:57685"/>
        <dbReference type="ChEBI" id="CHEBI:64716"/>
        <dbReference type="ChEBI" id="CHEBI:140658"/>
        <dbReference type="EC" id="2.5.1.145"/>
    </reaction>
</comment>
<comment type="pathway">
    <text evidence="1">Protein modification; lipoprotein biosynthesis (diacylglyceryl transfer).</text>
</comment>
<comment type="subcellular location">
    <subcellularLocation>
        <location evidence="1">Cell inner membrane</location>
        <topology evidence="1">Multi-pass membrane protein</topology>
    </subcellularLocation>
</comment>
<comment type="similarity">
    <text evidence="1">Belongs to the Lgt family.</text>
</comment>
<sequence>MPNYINYPSWLHPEVIQGIPITWYSLSYIFIILISYKFIWYQIQSDRIDIKKEDYETFMFSLVLGAILGGRLASTLVYDKSGIYYSHPWLIFLPFDQNWNFTGFRGMAIHGGFLGAIIAPLIIINTKLKNTNVKKYFLKLTDYGSIAFSSGYILGRLANFANAELYGRVMKGGIIFPNAEPFDTNTPGVKEFASSIGLEILPHDLLINLPRIPSQLIEGFFEGPVTCMLLWFLFRKIKKYDGFIFGIYVMLYAFFRFFIEYLREPDKDLGFIINYKPIKSLSEFSFLNISMGQILSLVLMFSGLIWVVVTKKIADKKIKNNTNLAYKN</sequence>
<evidence type="ECO:0000255" key="1">
    <source>
        <dbReference type="HAMAP-Rule" id="MF_01147"/>
    </source>
</evidence>
<organism>
    <name type="scientific">Borrelia garinii subsp. bavariensis (strain ATCC BAA-2496 / DSM 23469 / PBi)</name>
    <name type="common">Borreliella bavariensis</name>
    <dbReference type="NCBI Taxonomy" id="290434"/>
    <lineage>
        <taxon>Bacteria</taxon>
        <taxon>Pseudomonadati</taxon>
        <taxon>Spirochaetota</taxon>
        <taxon>Spirochaetia</taxon>
        <taxon>Spirochaetales</taxon>
        <taxon>Borreliaceae</taxon>
        <taxon>Borreliella</taxon>
    </lineage>
</organism>
<reference key="1">
    <citation type="journal article" date="2004" name="Nucleic Acids Res.">
        <title>Comparative analysis of the Borrelia garinii genome.</title>
        <authorList>
            <person name="Gloeckner G."/>
            <person name="Lehmann R."/>
            <person name="Romualdi A."/>
            <person name="Pradella S."/>
            <person name="Schulte-Spechtel U."/>
            <person name="Schilhabel M."/>
            <person name="Wilske B."/>
            <person name="Suehnel J."/>
            <person name="Platzer M."/>
        </authorList>
    </citation>
    <scope>NUCLEOTIDE SEQUENCE [LARGE SCALE GENOMIC DNA]</scope>
    <source>
        <strain>ATCC BAA-2496 / DSM 23469 / PBi</strain>
    </source>
</reference>
<proteinExistence type="inferred from homology"/>